<sequence length="120" mass="13761">MSRLTLPKNARLLKRKQFVYVQRNGRCCRADQVTLRVVPSRHSNTSKVGITVSKKFGKAHQRNRFKRIVREAFRHVRPNLPGCQVVISPRGNSQPDFLKLSEELLQRIPEALPLASSSRC</sequence>
<protein>
    <recommendedName>
        <fullName evidence="1">Ribonuclease P protein component</fullName>
        <shortName evidence="1">RNase P protein</shortName>
        <shortName evidence="1">RNaseP protein</shortName>
        <ecNumber evidence="1">3.1.26.5</ecNumber>
    </recommendedName>
    <alternativeName>
        <fullName evidence="1">Protein C5</fullName>
    </alternativeName>
</protein>
<name>RNPA_CHLTB</name>
<keyword id="KW-0255">Endonuclease</keyword>
<keyword id="KW-0378">Hydrolase</keyword>
<keyword id="KW-0540">Nuclease</keyword>
<keyword id="KW-0694">RNA-binding</keyword>
<keyword id="KW-0819">tRNA processing</keyword>
<reference key="1">
    <citation type="journal article" date="2008" name="Genome Res.">
        <title>Chlamydia trachomatis: genome sequence analysis of lymphogranuloma venereum isolates.</title>
        <authorList>
            <person name="Thomson N.R."/>
            <person name="Holden M.T.G."/>
            <person name="Carder C."/>
            <person name="Lennard N."/>
            <person name="Lockey S.J."/>
            <person name="Marsh P."/>
            <person name="Skipp P."/>
            <person name="O'Connor C.D."/>
            <person name="Goodhead I."/>
            <person name="Norbertzcak H."/>
            <person name="Harris B."/>
            <person name="Ormond D."/>
            <person name="Rance R."/>
            <person name="Quail M.A."/>
            <person name="Parkhill J."/>
            <person name="Stephens R.S."/>
            <person name="Clarke I.N."/>
        </authorList>
    </citation>
    <scope>NUCLEOTIDE SEQUENCE [LARGE SCALE GENOMIC DNA]</scope>
    <source>
        <strain>UCH-1/proctitis</strain>
    </source>
</reference>
<proteinExistence type="inferred from homology"/>
<evidence type="ECO:0000255" key="1">
    <source>
        <dbReference type="HAMAP-Rule" id="MF_00227"/>
    </source>
</evidence>
<organism>
    <name type="scientific">Chlamydia trachomatis serovar L2b (strain UCH-1/proctitis)</name>
    <dbReference type="NCBI Taxonomy" id="471473"/>
    <lineage>
        <taxon>Bacteria</taxon>
        <taxon>Pseudomonadati</taxon>
        <taxon>Chlamydiota</taxon>
        <taxon>Chlamydiia</taxon>
        <taxon>Chlamydiales</taxon>
        <taxon>Chlamydiaceae</taxon>
        <taxon>Chlamydia/Chlamydophila group</taxon>
        <taxon>Chlamydia</taxon>
    </lineage>
</organism>
<gene>
    <name evidence="1" type="primary">rnpA</name>
    <name type="ordered locus">CTLon_0153</name>
</gene>
<accession>B0BAN9</accession>
<comment type="function">
    <text evidence="1">RNaseP catalyzes the removal of the 5'-leader sequence from pre-tRNA to produce the mature 5'-terminus. It can also cleave other RNA substrates such as 4.5S RNA. The protein component plays an auxiliary but essential role in vivo by binding to the 5'-leader sequence and broadening the substrate specificity of the ribozyme.</text>
</comment>
<comment type="catalytic activity">
    <reaction evidence="1">
        <text>Endonucleolytic cleavage of RNA, removing 5'-extranucleotides from tRNA precursor.</text>
        <dbReference type="EC" id="3.1.26.5"/>
    </reaction>
</comment>
<comment type="subunit">
    <text evidence="1">Consists of a catalytic RNA component (M1 or rnpB) and a protein subunit.</text>
</comment>
<comment type="similarity">
    <text evidence="1">Belongs to the RnpA family.</text>
</comment>
<feature type="chain" id="PRO_1000100349" description="Ribonuclease P protein component">
    <location>
        <begin position="1"/>
        <end position="120"/>
    </location>
</feature>
<dbReference type="EC" id="3.1.26.5" evidence="1"/>
<dbReference type="EMBL" id="AM884177">
    <property type="protein sequence ID" value="CAP06551.1"/>
    <property type="molecule type" value="Genomic_DNA"/>
</dbReference>
<dbReference type="RefSeq" id="WP_009873403.1">
    <property type="nucleotide sequence ID" value="NC_010280.2"/>
</dbReference>
<dbReference type="SMR" id="B0BAN9"/>
<dbReference type="KEGG" id="ctl:CTLon_0153"/>
<dbReference type="HOGENOM" id="CLU_117179_9_2_0"/>
<dbReference type="Proteomes" id="UP001154401">
    <property type="component" value="Chromosome"/>
</dbReference>
<dbReference type="GO" id="GO:0030677">
    <property type="term" value="C:ribonuclease P complex"/>
    <property type="evidence" value="ECO:0007669"/>
    <property type="project" value="TreeGrafter"/>
</dbReference>
<dbReference type="GO" id="GO:0042781">
    <property type="term" value="F:3'-tRNA processing endoribonuclease activity"/>
    <property type="evidence" value="ECO:0007669"/>
    <property type="project" value="TreeGrafter"/>
</dbReference>
<dbReference type="GO" id="GO:0004526">
    <property type="term" value="F:ribonuclease P activity"/>
    <property type="evidence" value="ECO:0007669"/>
    <property type="project" value="UniProtKB-UniRule"/>
</dbReference>
<dbReference type="GO" id="GO:0000049">
    <property type="term" value="F:tRNA binding"/>
    <property type="evidence" value="ECO:0007669"/>
    <property type="project" value="UniProtKB-UniRule"/>
</dbReference>
<dbReference type="GO" id="GO:0001682">
    <property type="term" value="P:tRNA 5'-leader removal"/>
    <property type="evidence" value="ECO:0007669"/>
    <property type="project" value="UniProtKB-UniRule"/>
</dbReference>
<dbReference type="FunFam" id="3.30.230.10:FF:000142">
    <property type="entry name" value="Ribonuclease P protein component"/>
    <property type="match status" value="1"/>
</dbReference>
<dbReference type="Gene3D" id="3.30.230.10">
    <property type="match status" value="1"/>
</dbReference>
<dbReference type="HAMAP" id="MF_00227">
    <property type="entry name" value="RNase_P"/>
    <property type="match status" value="1"/>
</dbReference>
<dbReference type="InterPro" id="IPR020568">
    <property type="entry name" value="Ribosomal_Su5_D2-typ_SF"/>
</dbReference>
<dbReference type="InterPro" id="IPR014721">
    <property type="entry name" value="Ribsml_uS5_D2-typ_fold_subgr"/>
</dbReference>
<dbReference type="InterPro" id="IPR000100">
    <property type="entry name" value="RNase_P"/>
</dbReference>
<dbReference type="InterPro" id="IPR020539">
    <property type="entry name" value="RNase_P_CS"/>
</dbReference>
<dbReference type="NCBIfam" id="TIGR00188">
    <property type="entry name" value="rnpA"/>
    <property type="match status" value="1"/>
</dbReference>
<dbReference type="PANTHER" id="PTHR33992">
    <property type="entry name" value="RIBONUCLEASE P PROTEIN COMPONENT"/>
    <property type="match status" value="1"/>
</dbReference>
<dbReference type="PANTHER" id="PTHR33992:SF1">
    <property type="entry name" value="RIBONUCLEASE P PROTEIN COMPONENT"/>
    <property type="match status" value="1"/>
</dbReference>
<dbReference type="Pfam" id="PF00825">
    <property type="entry name" value="Ribonuclease_P"/>
    <property type="match status" value="1"/>
</dbReference>
<dbReference type="SUPFAM" id="SSF54211">
    <property type="entry name" value="Ribosomal protein S5 domain 2-like"/>
    <property type="match status" value="1"/>
</dbReference>
<dbReference type="PROSITE" id="PS00648">
    <property type="entry name" value="RIBONUCLEASE_P"/>
    <property type="match status" value="1"/>
</dbReference>